<sequence>MAAESGSDFQQRRRRRRDPEEPEKTELSERELAVAVAVSQENDEENEERWVGPLPVEATLAKKRKVLEFERVYLDNLPSASMYERSYMHRDVITHVVCTKTDFIITASHDGHVKFWKKIEEGIEFVKHFRSHLGVIESIAVSSEGALFCSVGDDKAMKVFDVVNFDMINMLKLGYFPGQCEWIYCPGDAISSVAASEKSTGKIFIYDGRGDNQPLHIFDKLHTSPLTQIRLNPVYKAVVSSDKSGMIEYWTGPPHEYKFPKNVNWEYKTDTDLYEFAKCKAYPTSVCFSPDGKKIATIGSDRKVRIFRFVTGKLMRVFDESLSMFTELQQMRQQLPDMEFGRRMAVERELEKVDAVRLINIVFDETGHFVLYGTMLGIKVINVETNRCVRILGKQENIRVMQLALFQGIAKKHRAATTIEMKASENPVLQNIQADPTIVCTSFKKNRFYMFTKREPEDTKSADSDRDVFNEKPSKEEVMAATQAEGPKRVSDSAIIHTSMGDIHTKLFPVECPKTVENFCVHSRNGYYNGHTFHRIIKGFMIQTGDPTGTGMGGESIWGGEFEDEFHSTLRHDRPYTLSMANAGSNTNGSQFFITVVPTPWLDNKHTVFGRVTKGMEVVQRISNVKVNPKTDKPYEDVSIINITVK</sequence>
<feature type="initiator methionine" description="Removed" evidence="12 13 14">
    <location>
        <position position="1"/>
    </location>
</feature>
<feature type="chain" id="PRO_0000240306" description="Peptidylprolyl isomerase domain and WD repeat-containing protein 1">
    <location>
        <begin position="2"/>
        <end position="646"/>
    </location>
</feature>
<feature type="repeat" description="WD 1">
    <location>
        <begin position="80"/>
        <end position="118"/>
    </location>
</feature>
<feature type="repeat" description="WD 2">
    <location>
        <begin position="124"/>
        <end position="162"/>
    </location>
</feature>
<feature type="repeat" description="WD 3">
    <location>
        <begin position="168"/>
        <end position="208"/>
    </location>
</feature>
<feature type="repeat" description="WD 4">
    <location>
        <begin position="213"/>
        <end position="252"/>
    </location>
</feature>
<feature type="repeat" description="WD 5">
    <location>
        <begin position="271"/>
        <end position="309"/>
    </location>
</feature>
<feature type="repeat" description="WD 6">
    <location>
        <begin position="345"/>
        <end position="386"/>
    </location>
</feature>
<feature type="repeat" description="WD 7">
    <location>
        <begin position="401"/>
        <end position="453"/>
    </location>
</feature>
<feature type="domain" description="PPIase cyclophilin-type" evidence="1">
    <location>
        <begin position="490"/>
        <end position="645"/>
    </location>
</feature>
<feature type="region of interest" description="Disordered" evidence="2">
    <location>
        <begin position="1"/>
        <end position="30"/>
    </location>
</feature>
<feature type="region of interest" description="Disordered" evidence="2">
    <location>
        <begin position="455"/>
        <end position="490"/>
    </location>
</feature>
<feature type="compositionally biased region" description="Basic and acidic residues" evidence="2">
    <location>
        <begin position="17"/>
        <end position="30"/>
    </location>
</feature>
<feature type="compositionally biased region" description="Basic and acidic residues" evidence="2">
    <location>
        <begin position="455"/>
        <end position="478"/>
    </location>
</feature>
<feature type="modified residue" description="N-acetylalanine" evidence="12 13 14">
    <location>
        <position position="2"/>
    </location>
</feature>
<feature type="splice variant" id="VSP_055266" description="In isoform 2." evidence="6">
    <location>
        <begin position="1"/>
        <end position="156"/>
    </location>
</feature>
<feature type="strand" evidence="15">
    <location>
        <begin position="492"/>
        <end position="498"/>
    </location>
</feature>
<feature type="strand" evidence="15">
    <location>
        <begin position="501"/>
        <end position="507"/>
    </location>
</feature>
<feature type="turn" evidence="15">
    <location>
        <begin position="509"/>
        <end position="511"/>
    </location>
</feature>
<feature type="helix" evidence="15">
    <location>
        <begin position="513"/>
        <end position="524"/>
    </location>
</feature>
<feature type="turn" evidence="15">
    <location>
        <begin position="525"/>
        <end position="530"/>
    </location>
</feature>
<feature type="strand" evidence="15">
    <location>
        <begin position="535"/>
        <end position="537"/>
    </location>
</feature>
<feature type="turn" evidence="15">
    <location>
        <begin position="538"/>
        <end position="540"/>
    </location>
</feature>
<feature type="strand" evidence="15">
    <location>
        <begin position="541"/>
        <end position="544"/>
    </location>
</feature>
<feature type="strand" evidence="15">
    <location>
        <begin position="549"/>
        <end position="552"/>
    </location>
</feature>
<feature type="strand" evidence="15">
    <location>
        <begin position="574"/>
        <end position="580"/>
    </location>
</feature>
<feature type="strand" evidence="15">
    <location>
        <begin position="592"/>
        <end position="597"/>
    </location>
</feature>
<feature type="helix" evidence="15">
    <location>
        <begin position="600"/>
        <end position="602"/>
    </location>
</feature>
<feature type="turn" evidence="15">
    <location>
        <begin position="603"/>
        <end position="605"/>
    </location>
</feature>
<feature type="strand" evidence="15">
    <location>
        <begin position="608"/>
        <end position="614"/>
    </location>
</feature>
<feature type="helix" evidence="15">
    <location>
        <begin position="616"/>
        <end position="623"/>
    </location>
</feature>
<feature type="turn" evidence="15">
    <location>
        <begin position="629"/>
        <end position="631"/>
    </location>
</feature>
<feature type="strand" evidence="15">
    <location>
        <begin position="634"/>
        <end position="636"/>
    </location>
</feature>
<feature type="strand" evidence="15">
    <location>
        <begin position="639"/>
        <end position="645"/>
    </location>
</feature>
<organism>
    <name type="scientific">Homo sapiens</name>
    <name type="common">Human</name>
    <dbReference type="NCBI Taxonomy" id="9606"/>
    <lineage>
        <taxon>Eukaryota</taxon>
        <taxon>Metazoa</taxon>
        <taxon>Chordata</taxon>
        <taxon>Craniata</taxon>
        <taxon>Vertebrata</taxon>
        <taxon>Euteleostomi</taxon>
        <taxon>Mammalia</taxon>
        <taxon>Eutheria</taxon>
        <taxon>Euarchontoglires</taxon>
        <taxon>Primates</taxon>
        <taxon>Haplorrhini</taxon>
        <taxon>Catarrhini</taxon>
        <taxon>Hominidae</taxon>
        <taxon>Homo</taxon>
    </lineage>
</organism>
<accession>Q96BP3</accession>
<accession>B4DWR9</accession>
<accession>Q15002</accession>
<accession>Q7KZ89</accession>
<gene>
    <name evidence="11" type="primary">PPWD1</name>
    <name evidence="10" type="synonym">KIAA0073</name>
</gene>
<comment type="function">
    <text evidence="3 5">PPIase that catalyzes the cis-trans isomerization of proline imidic peptide bonds in oligopeptides and may therefore assist protein folding (PubMed:20676357). May be involved in pre-mRNA splicing (PubMed:11991638).</text>
</comment>
<comment type="catalytic activity">
    <reaction evidence="5">
        <text>[protein]-peptidylproline (omega=180) = [protein]-peptidylproline (omega=0)</text>
        <dbReference type="Rhea" id="RHEA:16237"/>
        <dbReference type="Rhea" id="RHEA-COMP:10747"/>
        <dbReference type="Rhea" id="RHEA-COMP:10748"/>
        <dbReference type="ChEBI" id="CHEBI:83833"/>
        <dbReference type="ChEBI" id="CHEBI:83834"/>
        <dbReference type="EC" id="5.2.1.8"/>
    </reaction>
</comment>
<comment type="activity regulation">
    <text evidence="9">Inhibited by cyclosporin A (CsA).</text>
</comment>
<comment type="subunit">
    <text evidence="3">Identified in the spliceosome C complex.</text>
</comment>
<comment type="subcellular location">
    <subcellularLocation>
        <location evidence="4">Nucleus</location>
    </subcellularLocation>
    <text evidence="3">Associated with spliceosomal complexes.</text>
</comment>
<comment type="alternative products">
    <event type="alternative splicing"/>
    <isoform>
        <id>Q96BP3-1</id>
        <name>1</name>
        <sequence type="displayed"/>
    </isoform>
    <isoform>
        <id>Q96BP3-2</id>
        <name>2</name>
        <sequence type="described" ref="VSP_055266"/>
    </isoform>
</comment>
<comment type="similarity">
    <text evidence="7">Belongs to the cyclophilin-type PPIase family. PPIL1 subfamily.</text>
</comment>
<name>PPWD1_HUMAN</name>
<proteinExistence type="evidence at protein level"/>
<evidence type="ECO:0000255" key="1">
    <source>
        <dbReference type="PROSITE-ProRule" id="PRU00156"/>
    </source>
</evidence>
<evidence type="ECO:0000256" key="2">
    <source>
        <dbReference type="SAM" id="MobiDB-lite"/>
    </source>
</evidence>
<evidence type="ECO:0000269" key="3">
    <source>
    </source>
</evidence>
<evidence type="ECO:0000269" key="4">
    <source>
    </source>
</evidence>
<evidence type="ECO:0000269" key="5">
    <source>
    </source>
</evidence>
<evidence type="ECO:0000303" key="6">
    <source>
    </source>
</evidence>
<evidence type="ECO:0000305" key="7"/>
<evidence type="ECO:0000305" key="8">
    <source>
    </source>
</evidence>
<evidence type="ECO:0000305" key="9">
    <source>
    </source>
</evidence>
<evidence type="ECO:0000312" key="10">
    <source>
        <dbReference type="EMBL" id="BAA07555.1"/>
    </source>
</evidence>
<evidence type="ECO:0000312" key="11">
    <source>
        <dbReference type="HGNC" id="HGNC:28954"/>
    </source>
</evidence>
<evidence type="ECO:0007744" key="12">
    <source>
    </source>
</evidence>
<evidence type="ECO:0007744" key="13">
    <source>
    </source>
</evidence>
<evidence type="ECO:0007744" key="14">
    <source>
    </source>
</evidence>
<evidence type="ECO:0007829" key="15">
    <source>
        <dbReference type="PDB" id="2A2N"/>
    </source>
</evidence>
<reference key="1">
    <citation type="journal article" date="2004" name="Nat. Genet.">
        <title>Complete sequencing and characterization of 21,243 full-length human cDNAs.</title>
        <authorList>
            <person name="Ota T."/>
            <person name="Suzuki Y."/>
            <person name="Nishikawa T."/>
            <person name="Otsuki T."/>
            <person name="Sugiyama T."/>
            <person name="Irie R."/>
            <person name="Wakamatsu A."/>
            <person name="Hayashi K."/>
            <person name="Sato H."/>
            <person name="Nagai K."/>
            <person name="Kimura K."/>
            <person name="Makita H."/>
            <person name="Sekine M."/>
            <person name="Obayashi M."/>
            <person name="Nishi T."/>
            <person name="Shibahara T."/>
            <person name="Tanaka T."/>
            <person name="Ishii S."/>
            <person name="Yamamoto J."/>
            <person name="Saito K."/>
            <person name="Kawai Y."/>
            <person name="Isono Y."/>
            <person name="Nakamura Y."/>
            <person name="Nagahari K."/>
            <person name="Murakami K."/>
            <person name="Yasuda T."/>
            <person name="Iwayanagi T."/>
            <person name="Wagatsuma M."/>
            <person name="Shiratori A."/>
            <person name="Sudo H."/>
            <person name="Hosoiri T."/>
            <person name="Kaku Y."/>
            <person name="Kodaira H."/>
            <person name="Kondo H."/>
            <person name="Sugawara M."/>
            <person name="Takahashi M."/>
            <person name="Kanda K."/>
            <person name="Yokoi T."/>
            <person name="Furuya T."/>
            <person name="Kikkawa E."/>
            <person name="Omura Y."/>
            <person name="Abe K."/>
            <person name="Kamihara K."/>
            <person name="Katsuta N."/>
            <person name="Sato K."/>
            <person name="Tanikawa M."/>
            <person name="Yamazaki M."/>
            <person name="Ninomiya K."/>
            <person name="Ishibashi T."/>
            <person name="Yamashita H."/>
            <person name="Murakawa K."/>
            <person name="Fujimori K."/>
            <person name="Tanai H."/>
            <person name="Kimata M."/>
            <person name="Watanabe M."/>
            <person name="Hiraoka S."/>
            <person name="Chiba Y."/>
            <person name="Ishida S."/>
            <person name="Ono Y."/>
            <person name="Takiguchi S."/>
            <person name="Watanabe S."/>
            <person name="Yosida M."/>
            <person name="Hotuta T."/>
            <person name="Kusano J."/>
            <person name="Kanehori K."/>
            <person name="Takahashi-Fujii A."/>
            <person name="Hara H."/>
            <person name="Tanase T.-O."/>
            <person name="Nomura Y."/>
            <person name="Togiya S."/>
            <person name="Komai F."/>
            <person name="Hara R."/>
            <person name="Takeuchi K."/>
            <person name="Arita M."/>
            <person name="Imose N."/>
            <person name="Musashino K."/>
            <person name="Yuuki H."/>
            <person name="Oshima A."/>
            <person name="Sasaki N."/>
            <person name="Aotsuka S."/>
            <person name="Yoshikawa Y."/>
            <person name="Matsunawa H."/>
            <person name="Ichihara T."/>
            <person name="Shiohata N."/>
            <person name="Sano S."/>
            <person name="Moriya S."/>
            <person name="Momiyama H."/>
            <person name="Satoh N."/>
            <person name="Takami S."/>
            <person name="Terashima Y."/>
            <person name="Suzuki O."/>
            <person name="Nakagawa S."/>
            <person name="Senoh A."/>
            <person name="Mizoguchi H."/>
            <person name="Goto Y."/>
            <person name="Shimizu F."/>
            <person name="Wakebe H."/>
            <person name="Hishigaki H."/>
            <person name="Watanabe T."/>
            <person name="Sugiyama A."/>
            <person name="Takemoto M."/>
            <person name="Kawakami B."/>
            <person name="Yamazaki M."/>
            <person name="Watanabe K."/>
            <person name="Kumagai A."/>
            <person name="Itakura S."/>
            <person name="Fukuzumi Y."/>
            <person name="Fujimori Y."/>
            <person name="Komiyama M."/>
            <person name="Tashiro H."/>
            <person name="Tanigami A."/>
            <person name="Fujiwara T."/>
            <person name="Ono T."/>
            <person name="Yamada K."/>
            <person name="Fujii Y."/>
            <person name="Ozaki K."/>
            <person name="Hirao M."/>
            <person name="Ohmori Y."/>
            <person name="Kawabata A."/>
            <person name="Hikiji T."/>
            <person name="Kobatake N."/>
            <person name="Inagaki H."/>
            <person name="Ikema Y."/>
            <person name="Okamoto S."/>
            <person name="Okitani R."/>
            <person name="Kawakami T."/>
            <person name="Noguchi S."/>
            <person name="Itoh T."/>
            <person name="Shigeta K."/>
            <person name="Senba T."/>
            <person name="Matsumura K."/>
            <person name="Nakajima Y."/>
            <person name="Mizuno T."/>
            <person name="Morinaga M."/>
            <person name="Sasaki M."/>
            <person name="Togashi T."/>
            <person name="Oyama M."/>
            <person name="Hata H."/>
            <person name="Watanabe M."/>
            <person name="Komatsu T."/>
            <person name="Mizushima-Sugano J."/>
            <person name="Satoh T."/>
            <person name="Shirai Y."/>
            <person name="Takahashi Y."/>
            <person name="Nakagawa K."/>
            <person name="Okumura K."/>
            <person name="Nagase T."/>
            <person name="Nomura N."/>
            <person name="Kikuchi H."/>
            <person name="Masuho Y."/>
            <person name="Yamashita R."/>
            <person name="Nakai K."/>
            <person name="Yada T."/>
            <person name="Nakamura Y."/>
            <person name="Ohara O."/>
            <person name="Isogai T."/>
            <person name="Sugano S."/>
        </authorList>
    </citation>
    <scope>NUCLEOTIDE SEQUENCE [LARGE SCALE MRNA] (ISOFORM 2)</scope>
    <source>
        <tissue>Esophagus</tissue>
    </source>
</reference>
<reference key="2">
    <citation type="journal article" date="2004" name="Nature">
        <title>The DNA sequence and comparative analysis of human chromosome 5.</title>
        <authorList>
            <person name="Schmutz J."/>
            <person name="Martin J."/>
            <person name="Terry A."/>
            <person name="Couronne O."/>
            <person name="Grimwood J."/>
            <person name="Lowry S."/>
            <person name="Gordon L.A."/>
            <person name="Scott D."/>
            <person name="Xie G."/>
            <person name="Huang W."/>
            <person name="Hellsten U."/>
            <person name="Tran-Gyamfi M."/>
            <person name="She X."/>
            <person name="Prabhakar S."/>
            <person name="Aerts A."/>
            <person name="Altherr M."/>
            <person name="Bajorek E."/>
            <person name="Black S."/>
            <person name="Branscomb E."/>
            <person name="Caoile C."/>
            <person name="Challacombe J.F."/>
            <person name="Chan Y.M."/>
            <person name="Denys M."/>
            <person name="Detter J.C."/>
            <person name="Escobar J."/>
            <person name="Flowers D."/>
            <person name="Fotopulos D."/>
            <person name="Glavina T."/>
            <person name="Gomez M."/>
            <person name="Gonzales E."/>
            <person name="Goodstein D."/>
            <person name="Grigoriev I."/>
            <person name="Groza M."/>
            <person name="Hammon N."/>
            <person name="Hawkins T."/>
            <person name="Haydu L."/>
            <person name="Israni S."/>
            <person name="Jett J."/>
            <person name="Kadner K."/>
            <person name="Kimball H."/>
            <person name="Kobayashi A."/>
            <person name="Lopez F."/>
            <person name="Lou Y."/>
            <person name="Martinez D."/>
            <person name="Medina C."/>
            <person name="Morgan J."/>
            <person name="Nandkeshwar R."/>
            <person name="Noonan J.P."/>
            <person name="Pitluck S."/>
            <person name="Pollard M."/>
            <person name="Predki P."/>
            <person name="Priest J."/>
            <person name="Ramirez L."/>
            <person name="Retterer J."/>
            <person name="Rodriguez A."/>
            <person name="Rogers S."/>
            <person name="Salamov A."/>
            <person name="Salazar A."/>
            <person name="Thayer N."/>
            <person name="Tice H."/>
            <person name="Tsai M."/>
            <person name="Ustaszewska A."/>
            <person name="Vo N."/>
            <person name="Wheeler J."/>
            <person name="Wu K."/>
            <person name="Yang J."/>
            <person name="Dickson M."/>
            <person name="Cheng J.-F."/>
            <person name="Eichler E.E."/>
            <person name="Olsen A."/>
            <person name="Pennacchio L.A."/>
            <person name="Rokhsar D.S."/>
            <person name="Richardson P."/>
            <person name="Lucas S.M."/>
            <person name="Myers R.M."/>
            <person name="Rubin E.M."/>
        </authorList>
    </citation>
    <scope>NUCLEOTIDE SEQUENCE [LARGE SCALE GENOMIC DNA]</scope>
</reference>
<reference key="3">
    <citation type="journal article" date="2004" name="Genome Res.">
        <title>The status, quality, and expansion of the NIH full-length cDNA project: the Mammalian Gene Collection (MGC).</title>
        <authorList>
            <consortium name="The MGC Project Team"/>
        </authorList>
    </citation>
    <scope>NUCLEOTIDE SEQUENCE [LARGE SCALE MRNA] (ISOFORM 1)</scope>
    <source>
        <tissue>Bone</tissue>
    </source>
</reference>
<reference key="4">
    <citation type="journal article" date="1994" name="DNA Res.">
        <title>Prediction of the coding sequences of unidentified human genes. II. The coding sequences of 40 new genes (KIAA0041-KIAA0080) deduced by analysis of cDNA clones from human cell line KG-1.</title>
        <authorList>
            <person name="Nomura N."/>
            <person name="Nagase T."/>
            <person name="Miyajima N."/>
            <person name="Sazuka T."/>
            <person name="Tanaka A."/>
            <person name="Sato S."/>
            <person name="Seki N."/>
            <person name="Kawarabayasi Y."/>
            <person name="Ishikawa K."/>
            <person name="Tabata S."/>
        </authorList>
    </citation>
    <scope>NUCLEOTIDE SEQUENCE [LARGE SCALE MRNA] OF 2-646 (ISOFORM 1)</scope>
    <source>
        <tissue>Bone marrow</tissue>
    </source>
</reference>
<reference key="5">
    <citation type="journal article" date="2002" name="RNA">
        <title>Purification and characterization of native spliceosomes suitable for three-dimensional structural analysis.</title>
        <authorList>
            <person name="Jurica M.S."/>
            <person name="Licklider L.J."/>
            <person name="Gygi S.P."/>
            <person name="Grigorieff N."/>
            <person name="Moore M.J."/>
        </authorList>
    </citation>
    <scope>FUNCTION</scope>
    <scope>IDENTIFICATION BY MASS SPECTROMETRY</scope>
    <scope>IDENTIFICATION IN THE SPLICEOSOMAL C COMPLEX</scope>
</reference>
<reference key="6">
    <citation type="journal article" date="2009" name="Anal. Chem.">
        <title>Lys-N and trypsin cover complementary parts of the phosphoproteome in a refined SCX-based approach.</title>
        <authorList>
            <person name="Gauci S."/>
            <person name="Helbig A.O."/>
            <person name="Slijper M."/>
            <person name="Krijgsveld J."/>
            <person name="Heck A.J."/>
            <person name="Mohammed S."/>
        </authorList>
    </citation>
    <scope>ACETYLATION [LARGE SCALE ANALYSIS] AT ALA-2</scope>
    <scope>CLEAVAGE OF INITIATOR METHIONINE [LARGE SCALE ANALYSIS]</scope>
    <scope>IDENTIFICATION BY MASS SPECTROMETRY [LARGE SCALE ANALYSIS]</scope>
</reference>
<reference key="7">
    <citation type="journal article" date="2010" name="PLoS Biol.">
        <title>Structural and biochemical characterization of the human cyclophilin family of peptidyl-prolyl isomerases.</title>
        <authorList>
            <person name="Davis T.L."/>
            <person name="Walker J.R."/>
            <person name="Campagna-Slater V."/>
            <person name="Finerty P.J."/>
            <person name="Paramanathan R."/>
            <person name="Bernstein G."/>
            <person name="MacKenzie F."/>
            <person name="Tempel W."/>
            <person name="Ouyang H."/>
            <person name="Lee W.H."/>
            <person name="Eisenmesser E.Z."/>
            <person name="Dhe-Paganon S."/>
        </authorList>
    </citation>
    <scope>FUNCTION</scope>
    <scope>CATALYTIC ACTIVITY</scope>
    <scope>ACTIVITY REGULATION</scope>
</reference>
<reference key="8">
    <citation type="journal article" date="2011" name="BMC Syst. Biol.">
        <title>Initial characterization of the human central proteome.</title>
        <authorList>
            <person name="Burkard T.R."/>
            <person name="Planyavsky M."/>
            <person name="Kaupe I."/>
            <person name="Breitwieser F.P."/>
            <person name="Buerckstuemmer T."/>
            <person name="Bennett K.L."/>
            <person name="Superti-Furga G."/>
            <person name="Colinge J."/>
        </authorList>
    </citation>
    <scope>IDENTIFICATION BY MASS SPECTROMETRY [LARGE SCALE ANALYSIS]</scope>
</reference>
<reference key="9">
    <citation type="journal article" date="2012" name="Mol. Cell. Proteomics">
        <title>Comparative large-scale characterisation of plant vs. mammal proteins reveals similar and idiosyncratic N-alpha acetylation features.</title>
        <authorList>
            <person name="Bienvenut W.V."/>
            <person name="Sumpton D."/>
            <person name="Martinez A."/>
            <person name="Lilla S."/>
            <person name="Espagne C."/>
            <person name="Meinnel T."/>
            <person name="Giglione C."/>
        </authorList>
    </citation>
    <scope>ACETYLATION [LARGE SCALE ANALYSIS] AT ALA-2</scope>
    <scope>CLEAVAGE OF INITIATOR METHIONINE [LARGE SCALE ANALYSIS]</scope>
    <scope>IDENTIFICATION BY MASS SPECTROMETRY [LARGE SCALE ANALYSIS]</scope>
</reference>
<reference key="10">
    <citation type="journal article" date="2012" name="Proc. Natl. Acad. Sci. U.S.A.">
        <title>N-terminal acetylome analyses and functional insights of the N-terminal acetyltransferase NatB.</title>
        <authorList>
            <person name="Van Damme P."/>
            <person name="Lasa M."/>
            <person name="Polevoda B."/>
            <person name="Gazquez C."/>
            <person name="Elosegui-Artola A."/>
            <person name="Kim D.S."/>
            <person name="De Juan-Pardo E."/>
            <person name="Demeyer K."/>
            <person name="Hole K."/>
            <person name="Larrea E."/>
            <person name="Timmerman E."/>
            <person name="Prieto J."/>
            <person name="Arnesen T."/>
            <person name="Sherman F."/>
            <person name="Gevaert K."/>
            <person name="Aldabe R."/>
        </authorList>
    </citation>
    <scope>ACETYLATION [LARGE SCALE ANALYSIS] AT ALA-2</scope>
    <scope>CLEAVAGE OF INITIATOR METHIONINE [LARGE SCALE ANALYSIS]</scope>
    <scope>IDENTIFICATION BY MASS SPECTROMETRY [LARGE SCALE ANALYSIS]</scope>
</reference>
<reference key="11">
    <citation type="journal article" date="2008" name="FEBS J.">
        <title>The crystal structure of human WD40 repeat-containing peptidylprolyl isomerase (PPWD1).</title>
        <authorList>
            <person name="Davis T.L."/>
            <person name="Walker J.R."/>
            <person name="Ouyang H."/>
            <person name="MacKenzie F."/>
            <person name="Butler-Cole C."/>
            <person name="Newman E.M."/>
            <person name="Eisenmesser E.Z."/>
            <person name="Dhe-Paganon S."/>
        </authorList>
    </citation>
    <scope>X-RAY CRYSTALLOGRAPHY (1.65 ANGSTROMS) OF 473-646</scope>
    <scope>SUBCELLULAR LOCATION</scope>
</reference>
<keyword id="KW-0002">3D-structure</keyword>
<keyword id="KW-0007">Acetylation</keyword>
<keyword id="KW-0025">Alternative splicing</keyword>
<keyword id="KW-0413">Isomerase</keyword>
<keyword id="KW-0507">mRNA processing</keyword>
<keyword id="KW-0508">mRNA splicing</keyword>
<keyword id="KW-0539">Nucleus</keyword>
<keyword id="KW-1267">Proteomics identification</keyword>
<keyword id="KW-1185">Reference proteome</keyword>
<keyword id="KW-0677">Repeat</keyword>
<keyword id="KW-0697">Rotamase</keyword>
<keyword id="KW-0747">Spliceosome</keyword>
<keyword id="KW-0853">WD repeat</keyword>
<protein>
    <recommendedName>
        <fullName evidence="7">Peptidylprolyl isomerase domain and WD repeat-containing protein 1</fullName>
        <ecNumber evidence="5">5.2.1.8</ecNumber>
    </recommendedName>
    <alternativeName>
        <fullName evidence="8">Spliceosome-associated cyclophilin</fullName>
    </alternativeName>
</protein>
<dbReference type="EC" id="5.2.1.8" evidence="5"/>
<dbReference type="EMBL" id="AK301654">
    <property type="protein sequence ID" value="BAG63131.1"/>
    <property type="molecule type" value="mRNA"/>
</dbReference>
<dbReference type="EMBL" id="AC008560">
    <property type="status" value="NOT_ANNOTATED_CDS"/>
    <property type="molecule type" value="Genomic_DNA"/>
</dbReference>
<dbReference type="EMBL" id="BC015385">
    <property type="protein sequence ID" value="AAH15385.1"/>
    <property type="molecule type" value="mRNA"/>
</dbReference>
<dbReference type="EMBL" id="D38552">
    <property type="protein sequence ID" value="BAA07555.1"/>
    <property type="molecule type" value="mRNA"/>
</dbReference>
<dbReference type="CCDS" id="CCDS3985.1">
    <molecule id="Q96BP3-1"/>
</dbReference>
<dbReference type="CCDS" id="CCDS64162.1">
    <molecule id="Q96BP3-2"/>
</dbReference>
<dbReference type="RefSeq" id="NP_001265855.1">
    <property type="nucleotide sequence ID" value="NM_001278926.1"/>
</dbReference>
<dbReference type="RefSeq" id="NP_001265856.1">
    <property type="nucleotide sequence ID" value="NM_001278927.1"/>
</dbReference>
<dbReference type="RefSeq" id="NP_001265858.1">
    <molecule id="Q96BP3-2"/>
    <property type="nucleotide sequence ID" value="NM_001278929.2"/>
</dbReference>
<dbReference type="RefSeq" id="NP_056157.1">
    <molecule id="Q96BP3-1"/>
    <property type="nucleotide sequence ID" value="NM_015342.4"/>
</dbReference>
<dbReference type="PDB" id="2A2N">
    <property type="method" value="X-ray"/>
    <property type="resolution" value="1.65 A"/>
    <property type="chains" value="A/B/C=473-646"/>
</dbReference>
<dbReference type="PDB" id="5YZG">
    <property type="method" value="EM"/>
    <property type="resolution" value="4.10 A"/>
    <property type="chains" value="2=1-646"/>
</dbReference>
<dbReference type="PDB" id="7A5P">
    <property type="method" value="EM"/>
    <property type="resolution" value="5.00 A"/>
    <property type="chains" value="z=1-646"/>
</dbReference>
<dbReference type="PDB" id="8I0W">
    <property type="method" value="EM"/>
    <property type="resolution" value="3.40 A"/>
    <property type="chains" value="3=1-646"/>
</dbReference>
<dbReference type="PDB" id="9FMD">
    <property type="method" value="EM"/>
    <property type="resolution" value="3.30 A"/>
    <property type="chains" value="w=1-646"/>
</dbReference>
<dbReference type="PDBsum" id="2A2N"/>
<dbReference type="PDBsum" id="5YZG"/>
<dbReference type="PDBsum" id="7A5P"/>
<dbReference type="PDBsum" id="8I0W"/>
<dbReference type="PDBsum" id="9FMD"/>
<dbReference type="EMDB" id="EMD-35113"/>
<dbReference type="EMDB" id="EMD-6864"/>
<dbReference type="SMR" id="Q96BP3"/>
<dbReference type="BioGRID" id="116971">
    <property type="interactions" value="78"/>
</dbReference>
<dbReference type="CORUM" id="Q96BP3"/>
<dbReference type="FunCoup" id="Q96BP3">
    <property type="interactions" value="3137"/>
</dbReference>
<dbReference type="IntAct" id="Q96BP3">
    <property type="interactions" value="24"/>
</dbReference>
<dbReference type="MINT" id="Q96BP3"/>
<dbReference type="STRING" id="9606.ENSP00000261308"/>
<dbReference type="GlyGen" id="Q96BP3">
    <property type="glycosylation" value="2 sites, 1 O-linked glycan (1 site)"/>
</dbReference>
<dbReference type="iPTMnet" id="Q96BP3"/>
<dbReference type="MetOSite" id="Q96BP3"/>
<dbReference type="PhosphoSitePlus" id="Q96BP3"/>
<dbReference type="SwissPalm" id="Q96BP3"/>
<dbReference type="BioMuta" id="PPWD1"/>
<dbReference type="DMDM" id="74760739"/>
<dbReference type="jPOST" id="Q96BP3"/>
<dbReference type="MassIVE" id="Q96BP3"/>
<dbReference type="PaxDb" id="9606-ENSP00000261308"/>
<dbReference type="PeptideAtlas" id="Q96BP3"/>
<dbReference type="ProteomicsDB" id="5373"/>
<dbReference type="ProteomicsDB" id="76096">
    <molecule id="Q96BP3-1"/>
</dbReference>
<dbReference type="Pumba" id="Q96BP3"/>
<dbReference type="Antibodypedia" id="11576">
    <property type="antibodies" value="218 antibodies from 23 providers"/>
</dbReference>
<dbReference type="DNASU" id="23398"/>
<dbReference type="Ensembl" id="ENST00000261308.10">
    <molecule id="Q96BP3-1"/>
    <property type="protein sequence ID" value="ENSP00000261308.4"/>
    <property type="gene ID" value="ENSG00000113593.12"/>
</dbReference>
<dbReference type="Ensembl" id="ENST00000538977.5">
    <molecule id="Q96BP3-2"/>
    <property type="protein sequence ID" value="ENSP00000444496.1"/>
    <property type="gene ID" value="ENSG00000113593.12"/>
</dbReference>
<dbReference type="GeneID" id="23398"/>
<dbReference type="KEGG" id="hsa:23398"/>
<dbReference type="MANE-Select" id="ENST00000261308.10">
    <property type="protein sequence ID" value="ENSP00000261308.4"/>
    <property type="RefSeq nucleotide sequence ID" value="NM_015342.4"/>
    <property type="RefSeq protein sequence ID" value="NP_056157.1"/>
</dbReference>
<dbReference type="UCSC" id="uc003jtv.6">
    <molecule id="Q96BP3-1"/>
    <property type="organism name" value="human"/>
</dbReference>
<dbReference type="AGR" id="HGNC:28954"/>
<dbReference type="CTD" id="23398"/>
<dbReference type="DisGeNET" id="23398"/>
<dbReference type="GeneCards" id="PPWD1"/>
<dbReference type="HGNC" id="HGNC:28954">
    <property type="gene designation" value="PPWD1"/>
</dbReference>
<dbReference type="HPA" id="ENSG00000113593">
    <property type="expression patterns" value="Low tissue specificity"/>
</dbReference>
<dbReference type="MIM" id="618274">
    <property type="type" value="gene"/>
</dbReference>
<dbReference type="neXtProt" id="NX_Q96BP3"/>
<dbReference type="OpenTargets" id="ENSG00000113593"/>
<dbReference type="PharmGKB" id="PA142671149"/>
<dbReference type="VEuPathDB" id="HostDB:ENSG00000113593"/>
<dbReference type="eggNOG" id="KOG0882">
    <property type="taxonomic scope" value="Eukaryota"/>
</dbReference>
<dbReference type="GeneTree" id="ENSGT00940000158733"/>
<dbReference type="HOGENOM" id="CLU_012062_31_2_1"/>
<dbReference type="InParanoid" id="Q96BP3"/>
<dbReference type="OMA" id="GMVEYWR"/>
<dbReference type="OrthoDB" id="10264753at2759"/>
<dbReference type="PAN-GO" id="Q96BP3">
    <property type="GO annotations" value="3 GO annotations based on evolutionary models"/>
</dbReference>
<dbReference type="PhylomeDB" id="Q96BP3"/>
<dbReference type="TreeFam" id="TF105686"/>
<dbReference type="BRENDA" id="5.2.1.8">
    <property type="organism ID" value="2681"/>
</dbReference>
<dbReference type="PathwayCommons" id="Q96BP3"/>
<dbReference type="Reactome" id="R-HSA-72163">
    <property type="pathway name" value="mRNA Splicing - Major Pathway"/>
</dbReference>
<dbReference type="SignaLink" id="Q96BP3"/>
<dbReference type="BioGRID-ORCS" id="23398">
    <property type="hits" value="777 hits in 1165 CRISPR screens"/>
</dbReference>
<dbReference type="ChiTaRS" id="PPWD1">
    <property type="organism name" value="human"/>
</dbReference>
<dbReference type="EvolutionaryTrace" id="Q96BP3"/>
<dbReference type="GenomeRNAi" id="23398"/>
<dbReference type="Pharos" id="Q96BP3">
    <property type="development level" value="Tbio"/>
</dbReference>
<dbReference type="PRO" id="PR:Q96BP3"/>
<dbReference type="Proteomes" id="UP000005640">
    <property type="component" value="Chromosome 5"/>
</dbReference>
<dbReference type="RNAct" id="Q96BP3">
    <property type="molecule type" value="protein"/>
</dbReference>
<dbReference type="Bgee" id="ENSG00000113593">
    <property type="expression patterns" value="Expressed in calcaneal tendon and 193 other cell types or tissues"/>
</dbReference>
<dbReference type="ExpressionAtlas" id="Q96BP3">
    <property type="expression patterns" value="baseline and differential"/>
</dbReference>
<dbReference type="GO" id="GO:0071013">
    <property type="term" value="C:catalytic step 2 spliceosome"/>
    <property type="evidence" value="ECO:0000314"/>
    <property type="project" value="UniProtKB"/>
</dbReference>
<dbReference type="GO" id="GO:0016604">
    <property type="term" value="C:nuclear body"/>
    <property type="evidence" value="ECO:0000314"/>
    <property type="project" value="HPA"/>
</dbReference>
<dbReference type="GO" id="GO:0005654">
    <property type="term" value="C:nucleoplasm"/>
    <property type="evidence" value="ECO:0000304"/>
    <property type="project" value="Reactome"/>
</dbReference>
<dbReference type="GO" id="GO:0003755">
    <property type="term" value="F:peptidyl-prolyl cis-trans isomerase activity"/>
    <property type="evidence" value="ECO:0000314"/>
    <property type="project" value="UniProtKB"/>
</dbReference>
<dbReference type="GO" id="GO:0000398">
    <property type="term" value="P:mRNA splicing, via spliceosome"/>
    <property type="evidence" value="ECO:0000305"/>
    <property type="project" value="UniProtKB"/>
</dbReference>
<dbReference type="GO" id="GO:0006457">
    <property type="term" value="P:protein folding"/>
    <property type="evidence" value="ECO:0000318"/>
    <property type="project" value="GO_Central"/>
</dbReference>
<dbReference type="CDD" id="cd01927">
    <property type="entry name" value="cyclophilin_WD40"/>
    <property type="match status" value="1"/>
</dbReference>
<dbReference type="FunFam" id="2.40.100.10:FF:000003">
    <property type="entry name" value="Peptidylprolyl isomerase domain and WD repeat-containing 1"/>
    <property type="match status" value="1"/>
</dbReference>
<dbReference type="FunFam" id="2.130.10.10:FF:000394">
    <property type="entry name" value="Peptidylprolyl isomerase domain and WD repeat-containing protein 1"/>
    <property type="match status" value="1"/>
</dbReference>
<dbReference type="FunFam" id="2.130.10.10:FF:000119">
    <property type="entry name" value="peptidylprolyl isomerase domain and WD repeat-containing protein 1 isoform X2"/>
    <property type="match status" value="1"/>
</dbReference>
<dbReference type="Gene3D" id="2.40.100.10">
    <property type="entry name" value="Cyclophilin-like"/>
    <property type="match status" value="1"/>
</dbReference>
<dbReference type="Gene3D" id="2.130.10.10">
    <property type="entry name" value="YVTN repeat-like/Quinoprotein amine dehydrogenase"/>
    <property type="match status" value="2"/>
</dbReference>
<dbReference type="InterPro" id="IPR029000">
    <property type="entry name" value="Cyclophilin-like_dom_sf"/>
</dbReference>
<dbReference type="InterPro" id="IPR002130">
    <property type="entry name" value="Cyclophilin-type_PPIase_dom"/>
</dbReference>
<dbReference type="InterPro" id="IPR044666">
    <property type="entry name" value="Cyclophilin_A-like"/>
</dbReference>
<dbReference type="InterPro" id="IPR015943">
    <property type="entry name" value="WD40/YVTN_repeat-like_dom_sf"/>
</dbReference>
<dbReference type="InterPro" id="IPR036322">
    <property type="entry name" value="WD40_repeat_dom_sf"/>
</dbReference>
<dbReference type="InterPro" id="IPR001680">
    <property type="entry name" value="WD40_rpt"/>
</dbReference>
<dbReference type="PANTHER" id="PTHR45625">
    <property type="entry name" value="PEPTIDYL-PROLYL CIS-TRANS ISOMERASE-RELATED"/>
    <property type="match status" value="1"/>
</dbReference>
<dbReference type="PANTHER" id="PTHR45625:SF4">
    <property type="entry name" value="PEPTIDYLPROLYL ISOMERASE DOMAIN AND WD REPEAT-CONTAINING PROTEIN 1"/>
    <property type="match status" value="1"/>
</dbReference>
<dbReference type="Pfam" id="PF00160">
    <property type="entry name" value="Pro_isomerase"/>
    <property type="match status" value="1"/>
</dbReference>
<dbReference type="Pfam" id="PF00400">
    <property type="entry name" value="WD40"/>
    <property type="match status" value="3"/>
</dbReference>
<dbReference type="PRINTS" id="PR00153">
    <property type="entry name" value="CSAPPISMRASE"/>
</dbReference>
<dbReference type="SMART" id="SM00320">
    <property type="entry name" value="WD40"/>
    <property type="match status" value="4"/>
</dbReference>
<dbReference type="SUPFAM" id="SSF50891">
    <property type="entry name" value="Cyclophilin-like"/>
    <property type="match status" value="1"/>
</dbReference>
<dbReference type="SUPFAM" id="SSF50978">
    <property type="entry name" value="WD40 repeat-like"/>
    <property type="match status" value="1"/>
</dbReference>
<dbReference type="PROSITE" id="PS50072">
    <property type="entry name" value="CSA_PPIASE_2"/>
    <property type="match status" value="1"/>
</dbReference>
<dbReference type="PROSITE" id="PS50082">
    <property type="entry name" value="WD_REPEATS_2"/>
    <property type="match status" value="1"/>
</dbReference>
<dbReference type="PROSITE" id="PS50294">
    <property type="entry name" value="WD_REPEATS_REGION"/>
    <property type="match status" value="1"/>
</dbReference>